<name>NICOL_SALSA</name>
<reference key="1">
    <citation type="journal article" date="2010" name="BMC Genomics">
        <title>Salmo salar and Esox lucius full-length cDNA sequences reveal changes in evolutionary pressures on a post-tetraploidization genome.</title>
        <authorList>
            <person name="Leong J.S."/>
            <person name="Jantzen S.G."/>
            <person name="von Schalburg K.R."/>
            <person name="Cooper G.A."/>
            <person name="Messmer A.M."/>
            <person name="Liao N.Y."/>
            <person name="Munro S."/>
            <person name="Moore R."/>
            <person name="Holt R.A."/>
            <person name="Jones S.J."/>
            <person name="Davidson W.S."/>
            <person name="Koop B.F."/>
        </authorList>
    </citation>
    <scope>NUCLEOTIDE SEQUENCE [LARGE SCALE MRNA]</scope>
    <source>
        <tissue>Spleen</tissue>
        <tissue>Thymus</tissue>
    </source>
</reference>
<evidence type="ECO:0000250" key="1">
    <source>
        <dbReference type="UniProtKB" id="Q3UR78"/>
    </source>
</evidence>
<evidence type="ECO:0000250" key="2">
    <source>
        <dbReference type="UniProtKB" id="Q5BLP8"/>
    </source>
</evidence>
<evidence type="ECO:0000255" key="3"/>
<evidence type="ECO:0000305" key="4"/>
<sequence>MVSSGYLQAVMLLLAVQLLCFRPSDAEQEAGTVIPAESRPCVDCHAFEFMQRALQDLKKTAFNLDARTETLVLRAERRALCDCMPTNTLR</sequence>
<dbReference type="EMBL" id="BT047355">
    <property type="protein sequence ID" value="ACI67156.1"/>
    <property type="molecule type" value="mRNA"/>
</dbReference>
<dbReference type="EMBL" id="BT125197">
    <property type="protein sequence ID" value="ADM15938.1"/>
    <property type="molecule type" value="mRNA"/>
</dbReference>
<dbReference type="RefSeq" id="NP_001134346.1">
    <property type="nucleotide sequence ID" value="NM_001140874.1"/>
</dbReference>
<dbReference type="STRING" id="8030.ENSSSAP00000023450"/>
<dbReference type="PaxDb" id="8030-ENSSSAP00000023450"/>
<dbReference type="Ensembl" id="ENSSSAT00020019628">
    <property type="protein sequence ID" value="ENSSSAP00020018415"/>
    <property type="gene ID" value="ENSSSAG00020007079"/>
</dbReference>
<dbReference type="Ensembl" id="ENSSSAT00070051329">
    <property type="protein sequence ID" value="ENSSSAP00070049210"/>
    <property type="gene ID" value="ENSSSAG00070032052"/>
</dbReference>
<dbReference type="Ensembl" id="ENSSSAT00075073725">
    <property type="protein sequence ID" value="ENSSSAP00075052619"/>
    <property type="gene ID" value="ENSSSAG00075035302"/>
</dbReference>
<dbReference type="GeneID" id="100195845"/>
<dbReference type="KEGG" id="sasa:100195845"/>
<dbReference type="CTD" id="401115"/>
<dbReference type="OrthoDB" id="165376at7898"/>
<dbReference type="Proteomes" id="UP000087266">
    <property type="component" value="Chromosome ssa07"/>
</dbReference>
<dbReference type="Bgee" id="ENSSSAG00000015725">
    <property type="expression patterns" value="Expressed in brain and 24 other cell types or tissues"/>
</dbReference>
<dbReference type="GO" id="GO:0005615">
    <property type="term" value="C:extracellular space"/>
    <property type="evidence" value="ECO:0000250"/>
    <property type="project" value="UniProtKB"/>
</dbReference>
<dbReference type="GO" id="GO:0003730">
    <property type="term" value="F:mRNA 3'-UTR binding"/>
    <property type="evidence" value="ECO:0000250"/>
    <property type="project" value="UniProtKB"/>
</dbReference>
<dbReference type="InterPro" id="IPR028147">
    <property type="entry name" value="NICOL"/>
</dbReference>
<dbReference type="PANTHER" id="PTHR35451">
    <property type="entry name" value="NEUROPEPTIDE-LIKE PROTEIN C4ORF48"/>
    <property type="match status" value="1"/>
</dbReference>
<dbReference type="PANTHER" id="PTHR35451:SF1">
    <property type="entry name" value="NEUROPEPTIDE-LIKE PROTEIN C4ORF48"/>
    <property type="match status" value="1"/>
</dbReference>
<dbReference type="Pfam" id="PF15161">
    <property type="entry name" value="Neuropep_like"/>
    <property type="match status" value="1"/>
</dbReference>
<organism>
    <name type="scientific">Salmo salar</name>
    <name type="common">Atlantic salmon</name>
    <dbReference type="NCBI Taxonomy" id="8030"/>
    <lineage>
        <taxon>Eukaryota</taxon>
        <taxon>Metazoa</taxon>
        <taxon>Chordata</taxon>
        <taxon>Craniata</taxon>
        <taxon>Vertebrata</taxon>
        <taxon>Euteleostomi</taxon>
        <taxon>Actinopterygii</taxon>
        <taxon>Neopterygii</taxon>
        <taxon>Teleostei</taxon>
        <taxon>Protacanthopterygii</taxon>
        <taxon>Salmoniformes</taxon>
        <taxon>Salmonidae</taxon>
        <taxon>Salmoninae</taxon>
        <taxon>Salmo</taxon>
    </lineage>
</organism>
<protein>
    <recommendedName>
        <fullName evidence="2">NELL2-interacting cell ontogeny regulator 1</fullName>
    </recommendedName>
</protein>
<comment type="function">
    <text evidence="1">mRNA-binding protein which interacts with a range of target mRNAs and may promote extracellular matrix production.</text>
</comment>
<comment type="subcellular location">
    <subcellularLocation>
        <location evidence="1">Secreted</location>
    </subcellularLocation>
</comment>
<comment type="similarity">
    <text evidence="4">Belongs to the NICOL family.</text>
</comment>
<feature type="signal peptide" evidence="3">
    <location>
        <begin position="1"/>
        <end position="26"/>
    </location>
</feature>
<feature type="chain" id="PRO_0000406955" description="NELL2-interacting cell ontogeny regulator 1">
    <location>
        <begin position="27"/>
        <end position="90"/>
    </location>
</feature>
<keyword id="KW-1185">Reference proteome</keyword>
<keyword id="KW-0694">RNA-binding</keyword>
<keyword id="KW-0964">Secreted</keyword>
<keyword id="KW-0732">Signal</keyword>
<proteinExistence type="inferred from homology"/>
<accession>B5X8I6</accession>
<gene>
    <name evidence="2" type="primary">nicol1</name>
</gene>